<organism>
    <name type="scientific">Varicella-zoster virus (strain Oka vaccine)</name>
    <name type="common">HHV-3</name>
    <name type="synonym">Human herpesvirus 3</name>
    <dbReference type="NCBI Taxonomy" id="341980"/>
    <lineage>
        <taxon>Viruses</taxon>
        <taxon>Duplodnaviria</taxon>
        <taxon>Heunggongvirae</taxon>
        <taxon>Peploviricota</taxon>
        <taxon>Herviviricetes</taxon>
        <taxon>Herpesvirales</taxon>
        <taxon>Orthoherpesviridae</taxon>
        <taxon>Alphaherpesvirinae</taxon>
        <taxon>Varicellovirus</taxon>
        <taxon>Varicellovirus humanalpha3</taxon>
        <taxon>Human herpesvirus 3</taxon>
    </lineage>
</organism>
<gene>
    <name type="ORF">ORF48</name>
</gene>
<proteinExistence type="inferred from homology"/>
<dbReference type="EC" id="3.1.-.-" evidence="1"/>
<dbReference type="EMBL" id="AB097932">
    <property type="status" value="NOT_ANNOTATED_CDS"/>
    <property type="molecule type" value="Genomic_DNA"/>
</dbReference>
<dbReference type="EMBL" id="AB097933">
    <property type="status" value="NOT_ANNOTATED_CDS"/>
    <property type="molecule type" value="Genomic_DNA"/>
</dbReference>
<dbReference type="EMBL" id="DQ008354">
    <property type="protein sequence ID" value="AAY57657.1"/>
    <property type="molecule type" value="Genomic_DNA"/>
</dbReference>
<dbReference type="EMBL" id="DQ008355">
    <property type="protein sequence ID" value="AAY57728.1"/>
    <property type="molecule type" value="Genomic_DNA"/>
</dbReference>
<dbReference type="SMR" id="Q4JQS7"/>
<dbReference type="IntAct" id="Q4JQS7">
    <property type="interactions" value="2"/>
</dbReference>
<dbReference type="Proteomes" id="UP000002603">
    <property type="component" value="Genome"/>
</dbReference>
<dbReference type="Proteomes" id="UP000008504">
    <property type="component" value="Genome"/>
</dbReference>
<dbReference type="Proteomes" id="UP000008505">
    <property type="component" value="Genome"/>
</dbReference>
<dbReference type="Proteomes" id="UP000008506">
    <property type="component" value="Genome"/>
</dbReference>
<dbReference type="GO" id="GO:0030430">
    <property type="term" value="C:host cell cytoplasm"/>
    <property type="evidence" value="ECO:0007669"/>
    <property type="project" value="UniProtKB-SubCell"/>
</dbReference>
<dbReference type="GO" id="GO:0042025">
    <property type="term" value="C:host cell nucleus"/>
    <property type="evidence" value="ECO:0007669"/>
    <property type="project" value="UniProtKB-SubCell"/>
</dbReference>
<dbReference type="GO" id="GO:0003677">
    <property type="term" value="F:DNA binding"/>
    <property type="evidence" value="ECO:0007669"/>
    <property type="project" value="InterPro"/>
</dbReference>
<dbReference type="GO" id="GO:0004519">
    <property type="term" value="F:endonuclease activity"/>
    <property type="evidence" value="ECO:0007669"/>
    <property type="project" value="UniProtKB-KW"/>
</dbReference>
<dbReference type="GO" id="GO:0004527">
    <property type="term" value="F:exonuclease activity"/>
    <property type="evidence" value="ECO:0007669"/>
    <property type="project" value="UniProtKB-KW"/>
</dbReference>
<dbReference type="Gene3D" id="3.90.320.10">
    <property type="match status" value="1"/>
</dbReference>
<dbReference type="HAMAP" id="MF_04009">
    <property type="entry name" value="HSV_AN"/>
    <property type="match status" value="1"/>
</dbReference>
<dbReference type="InterPro" id="IPR001616">
    <property type="entry name" value="Herpes_alk_exo"/>
</dbReference>
<dbReference type="InterPro" id="IPR011604">
    <property type="entry name" value="PDDEXK-like_dom_sf"/>
</dbReference>
<dbReference type="InterPro" id="IPR011335">
    <property type="entry name" value="Restrct_endonuc-II-like"/>
</dbReference>
<dbReference type="InterPro" id="IPR034720">
    <property type="entry name" value="Viral_alk_exo"/>
</dbReference>
<dbReference type="Pfam" id="PF01771">
    <property type="entry name" value="Viral_alk_exo"/>
    <property type="match status" value="1"/>
</dbReference>
<dbReference type="PRINTS" id="PR00924">
    <property type="entry name" value="ALKEXNUCLASE"/>
</dbReference>
<dbReference type="SUPFAM" id="SSF52980">
    <property type="entry name" value="Restriction endonuclease-like"/>
    <property type="match status" value="1"/>
</dbReference>
<feature type="chain" id="PRO_0000385137" description="Alkaline nuclease">
    <location>
        <begin position="1"/>
        <end position="551"/>
    </location>
</feature>
<feature type="site" description="Required for function" evidence="1">
    <location>
        <position position="188"/>
    </location>
</feature>
<feature type="site" description="Required for function" evidence="1">
    <location>
        <position position="260"/>
    </location>
</feature>
<feature type="site" description="Required for function" evidence="1">
    <location>
        <position position="286"/>
    </location>
</feature>
<feature type="site" description="Required for function" evidence="1">
    <location>
        <position position="288"/>
    </location>
</feature>
<sequence length="551" mass="61252">MARSGLDRIDISPQPAKKIARVGGLQHPFVKTDINTINVEHHFIDTLQKTSPNMDCRGMTAGIFIRLSHMYKILTTLESPNDVTYTTPGSTNALFFKTSTQPQEPHPEELASKLTQDDIKRILLTIESETRGQGDNAIWTLLRRNLITASTLKWSVSGPVIPPQWFYHHNTTDTYGDAAAMAFGKTNEPAARAIVEALFIDPADIRTPDHLTPEATTKFFNFDMLNTKSPSLLVGTPRIGTYECGLLIDVRTGLIGASLDVLVCDRDPLTGTLNPHPAETDISFFEIKCRAKYLFDPDDKNNPLGRTYTTLINRPTMANLRDFLYTIKNPCVSFFGPSANPSTREALITDHVEWKRLGFKGGRALTELDAHHLGLNRTISSRVWVFNDPDIQKGTITTIAWATGDTALQIPVFANPRHANFKQIAVQTYVLSGYFPALKLRPFLVTFIGRVRRPHEVGVPLRVDTQAAAIYEYNWPTIPPHCAVPVIAVLTPIEVDVPRVTKILKDTGNNAITSALRSLRWDNLHPAVEEESVDCANGTTSLLRATEKPLL</sequence>
<evidence type="ECO:0000255" key="1">
    <source>
        <dbReference type="HAMAP-Rule" id="MF_04009"/>
    </source>
</evidence>
<reference key="1">
    <citation type="journal article" date="2002" name="J. Virol.">
        <title>Comparison of the complete DNA sequences of the Oka varicella vaccine and its parental virus.</title>
        <authorList>
            <person name="Gomi Y."/>
            <person name="Sunamachi H."/>
            <person name="Mori Y."/>
            <person name="Nagaike K."/>
            <person name="Takahashi M."/>
            <person name="Yamanishi K."/>
        </authorList>
    </citation>
    <scope>NUCLEOTIDE SEQUENCE [LARGE SCALE GENOMIC DNA]</scope>
    <source>
        <strain>Isolate Human/Japan/P-Oka/1970</strain>
        <strain>Oka varicella vaccine Biken (V-Oka-Biken)</strain>
    </source>
</reference>
<reference key="2">
    <citation type="journal article" date="2008" name="J. Virol.">
        <title>Complete DNA sequences of two oka strain varicella-zoster virus genomes.</title>
        <authorList>
            <person name="Tillieux S.L."/>
            <person name="Halsey W.S."/>
            <person name="Thomas E.S."/>
            <person name="Voycik J.J."/>
            <person name="Sathe G.M."/>
            <person name="Vassilev V."/>
        </authorList>
    </citation>
    <scope>NUCLEOTIDE SEQUENCE [LARGE SCALE GENOMIC DNA]</scope>
    <source>
        <strain>Oka varicella vaccine VarilRix (V-Oka-GSK)</strain>
        <strain>Oka varicella vaccine Varivax (V-Oka-Merck)</strain>
    </source>
</reference>
<comment type="function">
    <text evidence="1">Plays a role in processing non linear or branched viral DNA intermediates in order to promote the production of mature packaged unit-length linear progeny viral DNA molecules. Exhibits endonuclease and exonuclease activities and accepts both double-stranded and single-stranded DNA as substrate. Exonuclease digestion of DNA is in the 5'-&gt; 3' direction and the products are 5'-monophosphate nucleosides. Additionally, forms a recombinase with the major DNA-binding protein, which displays strand exchange activity.</text>
</comment>
<comment type="subunit">
    <text evidence="1">Interacts with major DNA-binding protein; this interaction increases the nuclease processivity of the alkaline exonuclease.</text>
</comment>
<comment type="subcellular location">
    <subcellularLocation>
        <location evidence="1">Host nucleus</location>
    </subcellularLocation>
    <subcellularLocation>
        <location evidence="1">Host cytoplasm</location>
    </subcellularLocation>
</comment>
<comment type="similarity">
    <text evidence="1">Belongs to the herpesviridae alkaline nuclease family.</text>
</comment>
<name>AN_VZVO</name>
<accession>Q4JQS7</accession>
<organismHost>
    <name type="scientific">Homo sapiens</name>
    <name type="common">Human</name>
    <dbReference type="NCBI Taxonomy" id="9606"/>
</organismHost>
<protein>
    <recommendedName>
        <fullName evidence="1">Alkaline nuclease</fullName>
        <ecNumber evidence="1">3.1.-.-</ecNumber>
    </recommendedName>
</protein>
<keyword id="KW-0255">Endonuclease</keyword>
<keyword id="KW-0269">Exonuclease</keyword>
<keyword id="KW-1035">Host cytoplasm</keyword>
<keyword id="KW-1048">Host nucleus</keyword>
<keyword id="KW-0945">Host-virus interaction</keyword>
<keyword id="KW-0378">Hydrolase</keyword>
<keyword id="KW-0540">Nuclease</keyword>